<gene>
    <name evidence="1" type="primary">ttcA</name>
    <name type="ordered locus">ECP_1398</name>
</gene>
<protein>
    <recommendedName>
        <fullName evidence="1">tRNA-cytidine(32) 2-sulfurtransferase</fullName>
        <ecNumber evidence="1">2.8.1.-</ecNumber>
    </recommendedName>
    <alternativeName>
        <fullName evidence="1">Two-thiocytidine biosynthesis protein A</fullName>
    </alternativeName>
    <alternativeName>
        <fullName evidence="1">tRNA 2-thiocytidine biosynthesis protein TtcA</fullName>
    </alternativeName>
</protein>
<proteinExistence type="inferred from homology"/>
<dbReference type="EC" id="2.8.1.-" evidence="1"/>
<dbReference type="EMBL" id="AJ496193">
    <property type="protein sequence ID" value="CAD42727.1"/>
    <property type="molecule type" value="Genomic_DNA"/>
</dbReference>
<dbReference type="EMBL" id="CP000247">
    <property type="protein sequence ID" value="ABG69407.1"/>
    <property type="molecule type" value="Genomic_DNA"/>
</dbReference>
<dbReference type="RefSeq" id="WP_001157412.1">
    <property type="nucleotide sequence ID" value="NC_008253.1"/>
</dbReference>
<dbReference type="SMR" id="Q0TI22"/>
<dbReference type="KEGG" id="ecp:ECP_1398"/>
<dbReference type="HOGENOM" id="CLU_026481_0_0_6"/>
<dbReference type="Proteomes" id="UP000009182">
    <property type="component" value="Chromosome"/>
</dbReference>
<dbReference type="GO" id="GO:0005737">
    <property type="term" value="C:cytoplasm"/>
    <property type="evidence" value="ECO:0007669"/>
    <property type="project" value="UniProtKB-SubCell"/>
</dbReference>
<dbReference type="GO" id="GO:0051539">
    <property type="term" value="F:4 iron, 4 sulfur cluster binding"/>
    <property type="evidence" value="ECO:0007669"/>
    <property type="project" value="UniProtKB-UniRule"/>
</dbReference>
<dbReference type="GO" id="GO:0005524">
    <property type="term" value="F:ATP binding"/>
    <property type="evidence" value="ECO:0007669"/>
    <property type="project" value="UniProtKB-UniRule"/>
</dbReference>
<dbReference type="GO" id="GO:0000287">
    <property type="term" value="F:magnesium ion binding"/>
    <property type="evidence" value="ECO:0007669"/>
    <property type="project" value="UniProtKB-UniRule"/>
</dbReference>
<dbReference type="GO" id="GO:0016783">
    <property type="term" value="F:sulfurtransferase activity"/>
    <property type="evidence" value="ECO:0007669"/>
    <property type="project" value="UniProtKB-UniRule"/>
</dbReference>
<dbReference type="GO" id="GO:0000049">
    <property type="term" value="F:tRNA binding"/>
    <property type="evidence" value="ECO:0007669"/>
    <property type="project" value="UniProtKB-KW"/>
</dbReference>
<dbReference type="GO" id="GO:0034227">
    <property type="term" value="P:tRNA thio-modification"/>
    <property type="evidence" value="ECO:0007669"/>
    <property type="project" value="UniProtKB-UniRule"/>
</dbReference>
<dbReference type="CDD" id="cd24138">
    <property type="entry name" value="TtcA-like"/>
    <property type="match status" value="1"/>
</dbReference>
<dbReference type="FunFam" id="3.40.50.620:FF:000046">
    <property type="entry name" value="tRNA-cytidine(32) 2-sulfurtransferase"/>
    <property type="match status" value="1"/>
</dbReference>
<dbReference type="Gene3D" id="3.40.50.620">
    <property type="entry name" value="HUPs"/>
    <property type="match status" value="1"/>
</dbReference>
<dbReference type="HAMAP" id="MF_01850">
    <property type="entry name" value="TtcA"/>
    <property type="match status" value="1"/>
</dbReference>
<dbReference type="InterPro" id="IPR014729">
    <property type="entry name" value="Rossmann-like_a/b/a_fold"/>
</dbReference>
<dbReference type="InterPro" id="IPR011063">
    <property type="entry name" value="TilS/TtcA_N"/>
</dbReference>
<dbReference type="InterPro" id="IPR012089">
    <property type="entry name" value="tRNA_Cyd_32_2_STrfase"/>
</dbReference>
<dbReference type="InterPro" id="IPR035107">
    <property type="entry name" value="tRNA_thiolation_TtcA_Ctu1"/>
</dbReference>
<dbReference type="NCBIfam" id="NF007972">
    <property type="entry name" value="PRK10696.1"/>
    <property type="match status" value="1"/>
</dbReference>
<dbReference type="PANTHER" id="PTHR43686:SF1">
    <property type="entry name" value="AMINOTRAN_5 DOMAIN-CONTAINING PROTEIN"/>
    <property type="match status" value="1"/>
</dbReference>
<dbReference type="PANTHER" id="PTHR43686">
    <property type="entry name" value="SULFURTRANSFERASE-RELATED"/>
    <property type="match status" value="1"/>
</dbReference>
<dbReference type="Pfam" id="PF01171">
    <property type="entry name" value="ATP_bind_3"/>
    <property type="match status" value="1"/>
</dbReference>
<dbReference type="PIRSF" id="PIRSF004976">
    <property type="entry name" value="ATPase_YdaO"/>
    <property type="match status" value="1"/>
</dbReference>
<dbReference type="SUPFAM" id="SSF52402">
    <property type="entry name" value="Adenine nucleotide alpha hydrolases-like"/>
    <property type="match status" value="1"/>
</dbReference>
<accession>Q0TI22</accession>
<accession>Q8GC63</accession>
<name>TTCA_ECOL5</name>
<comment type="function">
    <text evidence="1">Catalyzes the ATP-dependent 2-thiolation of cytidine in position 32 of tRNA, to form 2-thiocytidine (s(2)C32). The sulfur atoms are provided by the cysteine/cysteine desulfurase (IscS) system.</text>
</comment>
<comment type="catalytic activity">
    <reaction evidence="1">
        <text>cytidine(32) in tRNA + S-sulfanyl-L-cysteinyl-[cysteine desulfurase] + AH2 + ATP = 2-thiocytidine(32) in tRNA + L-cysteinyl-[cysteine desulfurase] + A + AMP + diphosphate + H(+)</text>
        <dbReference type="Rhea" id="RHEA:57048"/>
        <dbReference type="Rhea" id="RHEA-COMP:10288"/>
        <dbReference type="Rhea" id="RHEA-COMP:12157"/>
        <dbReference type="Rhea" id="RHEA-COMP:12158"/>
        <dbReference type="Rhea" id="RHEA-COMP:14821"/>
        <dbReference type="ChEBI" id="CHEBI:13193"/>
        <dbReference type="ChEBI" id="CHEBI:15378"/>
        <dbReference type="ChEBI" id="CHEBI:17499"/>
        <dbReference type="ChEBI" id="CHEBI:29950"/>
        <dbReference type="ChEBI" id="CHEBI:30616"/>
        <dbReference type="ChEBI" id="CHEBI:33019"/>
        <dbReference type="ChEBI" id="CHEBI:61963"/>
        <dbReference type="ChEBI" id="CHEBI:82748"/>
        <dbReference type="ChEBI" id="CHEBI:141453"/>
        <dbReference type="ChEBI" id="CHEBI:456215"/>
    </reaction>
    <physiologicalReaction direction="left-to-right" evidence="1">
        <dbReference type="Rhea" id="RHEA:57049"/>
    </physiologicalReaction>
</comment>
<comment type="cofactor">
    <cofactor evidence="1">
        <name>Mg(2+)</name>
        <dbReference type="ChEBI" id="CHEBI:18420"/>
    </cofactor>
</comment>
<comment type="cofactor">
    <cofactor evidence="1">
        <name>[4Fe-4S] cluster</name>
        <dbReference type="ChEBI" id="CHEBI:49883"/>
    </cofactor>
    <text evidence="1">Binds 1 [4Fe-4S] cluster per subunit. The cluster is chelated by three Cys residues, the fourth Fe has a free coordination site that may bind a sulfur atom transferred from the persulfide of IscS.</text>
</comment>
<comment type="pathway">
    <text evidence="1">tRNA modification.</text>
</comment>
<comment type="subunit">
    <text evidence="1">Homodimer.</text>
</comment>
<comment type="subcellular location">
    <subcellularLocation>
        <location evidence="1">Cytoplasm</location>
    </subcellularLocation>
</comment>
<comment type="miscellaneous">
    <text evidence="1">The thiolation reaction likely consists of two steps: a first activation step by ATP to form an adenylated intermediate of the target base of tRNA, and a second nucleophilic substitution step of the sulfur (S) atom supplied by the hydrosulfide attached to the Fe-S cluster.</text>
</comment>
<comment type="similarity">
    <text evidence="1">Belongs to the TtcA family.</text>
</comment>
<feature type="chain" id="PRO_0000348725" description="tRNA-cytidine(32) 2-sulfurtransferase">
    <location>
        <begin position="1"/>
        <end position="311"/>
    </location>
</feature>
<feature type="short sequence motif" description="PP-loop motif" evidence="1">
    <location>
        <begin position="47"/>
        <end position="52"/>
    </location>
</feature>
<feature type="binding site" evidence="1">
    <location>
        <position position="122"/>
    </location>
    <ligand>
        <name>[4Fe-4S] cluster</name>
        <dbReference type="ChEBI" id="CHEBI:49883"/>
    </ligand>
</feature>
<feature type="binding site" evidence="1">
    <location>
        <position position="125"/>
    </location>
    <ligand>
        <name>[4Fe-4S] cluster</name>
        <dbReference type="ChEBI" id="CHEBI:49883"/>
    </ligand>
</feature>
<feature type="binding site" evidence="1">
    <location>
        <position position="213"/>
    </location>
    <ligand>
        <name>[4Fe-4S] cluster</name>
        <dbReference type="ChEBI" id="CHEBI:49883"/>
    </ligand>
</feature>
<evidence type="ECO:0000255" key="1">
    <source>
        <dbReference type="HAMAP-Rule" id="MF_01850"/>
    </source>
</evidence>
<sequence>MQENQQITKKEQYNLNKLQKRLRRNVGEAIADFNMIEEGDRIMVCLSGGKDSYTMLEILRNLQQSAPINFSLVAVNLDQKQPGFPEHVLPEYLETLGVEYKIVEENTYGIVKEKIPEGKTTCSLCSRLRRGILYRTATELGATKIALGHHRDDILQTLFLNMFYGGKMKGMPPKLMSDDGKHIVIRPLAYCREKDIQRFADAKAFPIIPCNLCGSQPNLQRQVIADMLRDWDKRYPGRIETMFSAMQNVVPSHLCDTNLFDFKGITHGSEVVNGGDLAFDREEIPLQPAGWQPEEDENQLDELRLNVVEVK</sequence>
<keyword id="KW-0004">4Fe-4S</keyword>
<keyword id="KW-0067">ATP-binding</keyword>
<keyword id="KW-0963">Cytoplasm</keyword>
<keyword id="KW-0408">Iron</keyword>
<keyword id="KW-0411">Iron-sulfur</keyword>
<keyword id="KW-0460">Magnesium</keyword>
<keyword id="KW-0479">Metal-binding</keyword>
<keyword id="KW-0547">Nucleotide-binding</keyword>
<keyword id="KW-0694">RNA-binding</keyword>
<keyword id="KW-0808">Transferase</keyword>
<keyword id="KW-0819">tRNA processing</keyword>
<keyword id="KW-0820">tRNA-binding</keyword>
<reference key="1">
    <citation type="journal article" date="2003" name="J. Bacteriol.">
        <title>Analysis of genome plasticity in pathogenic and commensal Escherichia coli isolates by use of DNA arrays.</title>
        <authorList>
            <person name="Dobrindt U."/>
            <person name="Agerer F."/>
            <person name="Michaelis K."/>
            <person name="Janka A."/>
            <person name="Buchrieser C."/>
            <person name="Samuelson M."/>
            <person name="Svanborg C."/>
            <person name="Gottschalk G."/>
            <person name="Karch H."/>
            <person name="Hacker J."/>
        </authorList>
    </citation>
    <scope>NUCLEOTIDE SEQUENCE [GENOMIC DNA]</scope>
</reference>
<reference key="2">
    <citation type="journal article" date="2006" name="Mol. Microbiol.">
        <title>Role of pathogenicity island-associated integrases in the genome plasticity of uropathogenic Escherichia coli strain 536.</title>
        <authorList>
            <person name="Hochhut B."/>
            <person name="Wilde C."/>
            <person name="Balling G."/>
            <person name="Middendorf B."/>
            <person name="Dobrindt U."/>
            <person name="Brzuszkiewicz E."/>
            <person name="Gottschalk G."/>
            <person name="Carniel E."/>
            <person name="Hacker J."/>
        </authorList>
    </citation>
    <scope>NUCLEOTIDE SEQUENCE [LARGE SCALE GENOMIC DNA]</scope>
    <source>
        <strain>536 / UPEC</strain>
    </source>
</reference>
<organism>
    <name type="scientific">Escherichia coli O6:K15:H31 (strain 536 / UPEC)</name>
    <dbReference type="NCBI Taxonomy" id="362663"/>
    <lineage>
        <taxon>Bacteria</taxon>
        <taxon>Pseudomonadati</taxon>
        <taxon>Pseudomonadota</taxon>
        <taxon>Gammaproteobacteria</taxon>
        <taxon>Enterobacterales</taxon>
        <taxon>Enterobacteriaceae</taxon>
        <taxon>Escherichia</taxon>
    </lineage>
</organism>